<feature type="signal peptide">
    <location>
        <begin position="1"/>
        <end position="27"/>
    </location>
</feature>
<feature type="propeptide" id="PRO_0000005750" description="N-terminal propeptide (7S domain)">
    <location>
        <begin position="28"/>
        <end position="172"/>
    </location>
</feature>
<feature type="chain" id="PRO_0000005751" description="Collagen alpha-1(IV) chain">
    <location>
        <begin position="173"/>
        <end position="1669"/>
    </location>
</feature>
<feature type="chain" id="PRO_0000390483" description="Arresten">
    <location>
        <begin position="1445"/>
        <end position="1669"/>
    </location>
</feature>
<feature type="domain" description="Collagen IV NC1" evidence="4">
    <location>
        <begin position="1445"/>
        <end position="1669"/>
    </location>
</feature>
<feature type="region of interest" description="Disordered" evidence="5">
    <location>
        <begin position="47"/>
        <end position="1443"/>
    </location>
</feature>
<feature type="region of interest" description="Triple-helical region">
    <location>
        <begin position="173"/>
        <end position="1440"/>
    </location>
</feature>
<feature type="compositionally biased region" description="Low complexity" evidence="5">
    <location>
        <begin position="92"/>
        <end position="104"/>
    </location>
</feature>
<feature type="compositionally biased region" description="Pro residues" evidence="5">
    <location>
        <begin position="196"/>
        <end position="214"/>
    </location>
</feature>
<feature type="compositionally biased region" description="Low complexity" evidence="5">
    <location>
        <begin position="234"/>
        <end position="247"/>
    </location>
</feature>
<feature type="compositionally biased region" description="Basic and acidic residues" evidence="5">
    <location>
        <begin position="289"/>
        <end position="298"/>
    </location>
</feature>
<feature type="compositionally biased region" description="Pro residues" evidence="5">
    <location>
        <begin position="367"/>
        <end position="376"/>
    </location>
</feature>
<feature type="compositionally biased region" description="Low complexity" evidence="5">
    <location>
        <begin position="377"/>
        <end position="387"/>
    </location>
</feature>
<feature type="compositionally biased region" description="Pro residues" evidence="5">
    <location>
        <begin position="413"/>
        <end position="424"/>
    </location>
</feature>
<feature type="compositionally biased region" description="Pro residues" evidence="5">
    <location>
        <begin position="436"/>
        <end position="448"/>
    </location>
</feature>
<feature type="compositionally biased region" description="Low complexity" evidence="5">
    <location>
        <begin position="485"/>
        <end position="494"/>
    </location>
</feature>
<feature type="compositionally biased region" description="Basic and acidic residues" evidence="5">
    <location>
        <begin position="497"/>
        <end position="508"/>
    </location>
</feature>
<feature type="compositionally biased region" description="Basic and acidic residues" evidence="5">
    <location>
        <begin position="535"/>
        <end position="545"/>
    </location>
</feature>
<feature type="compositionally biased region" description="Gly residues" evidence="5">
    <location>
        <begin position="586"/>
        <end position="595"/>
    </location>
</feature>
<feature type="compositionally biased region" description="Low complexity" evidence="5">
    <location>
        <begin position="611"/>
        <end position="620"/>
    </location>
</feature>
<feature type="compositionally biased region" description="Gly residues" evidence="5">
    <location>
        <begin position="621"/>
        <end position="630"/>
    </location>
</feature>
<feature type="compositionally biased region" description="Low complexity" evidence="5">
    <location>
        <begin position="715"/>
        <end position="731"/>
    </location>
</feature>
<feature type="compositionally biased region" description="Gly residues" evidence="5">
    <location>
        <begin position="758"/>
        <end position="767"/>
    </location>
</feature>
<feature type="compositionally biased region" description="Pro residues" evidence="5">
    <location>
        <begin position="784"/>
        <end position="802"/>
    </location>
</feature>
<feature type="compositionally biased region" description="Gly residues" evidence="5">
    <location>
        <begin position="803"/>
        <end position="817"/>
    </location>
</feature>
<feature type="compositionally biased region" description="Low complexity" evidence="5">
    <location>
        <begin position="847"/>
        <end position="875"/>
    </location>
</feature>
<feature type="compositionally biased region" description="Low complexity" evidence="5">
    <location>
        <begin position="994"/>
        <end position="1003"/>
    </location>
</feature>
<feature type="compositionally biased region" description="Gly residues" evidence="5">
    <location>
        <begin position="1011"/>
        <end position="1020"/>
    </location>
</feature>
<feature type="compositionally biased region" description="Low complexity" evidence="5">
    <location>
        <begin position="1220"/>
        <end position="1230"/>
    </location>
</feature>
<feature type="compositionally biased region" description="Pro residues" evidence="5">
    <location>
        <begin position="1247"/>
        <end position="1258"/>
    </location>
</feature>
<feature type="compositionally biased region" description="Gly residues" evidence="5">
    <location>
        <begin position="1290"/>
        <end position="1299"/>
    </location>
</feature>
<feature type="compositionally biased region" description="Low complexity" evidence="5">
    <location>
        <begin position="1333"/>
        <end position="1343"/>
    </location>
</feature>
<feature type="compositionally biased region" description="Low complexity" evidence="5">
    <location>
        <begin position="1368"/>
        <end position="1391"/>
    </location>
</feature>
<feature type="compositionally biased region" description="Low complexity" evidence="5">
    <location>
        <begin position="1398"/>
        <end position="1412"/>
    </location>
</feature>
<feature type="compositionally biased region" description="Pro residues" evidence="5">
    <location>
        <begin position="1413"/>
        <end position="1428"/>
    </location>
</feature>
<feature type="modified residue" description="3-hydroxyproline" evidence="2">
    <location>
        <position position="204"/>
    </location>
</feature>
<feature type="modified residue" description="3-hydroxyproline" evidence="2">
    <location>
        <position position="207"/>
    </location>
</feature>
<feature type="modified residue" description="3-hydroxyproline" evidence="2">
    <location>
        <position position="210"/>
    </location>
</feature>
<feature type="modified residue" description="3-hydroxyproline" evidence="2">
    <location>
        <position position="587"/>
    </location>
</feature>
<feature type="modified residue" description="3-hydroxyproline" evidence="10">
    <location>
        <position position="602"/>
    </location>
</feature>
<feature type="modified residue" description="4-hydroxyproline" evidence="10">
    <location>
        <position position="603"/>
    </location>
</feature>
<feature type="modified residue" description="3-hydroxyproline" evidence="10">
    <location>
        <position position="605"/>
    </location>
</feature>
<feature type="modified residue" description="4-hydroxyproline" evidence="10">
    <location>
        <position position="606"/>
    </location>
</feature>
<feature type="modified residue" description="4-hydroxyproline" evidence="10">
    <location>
        <position position="623"/>
    </location>
</feature>
<feature type="modified residue" description="4-hydroxyproline" evidence="10">
    <location>
        <position position="626"/>
    </location>
</feature>
<feature type="modified residue" description="4-hydroxyproline" evidence="10">
    <location>
        <position position="629"/>
    </location>
</feature>
<feature type="modified residue" description="4-hydroxyproline" evidence="10">
    <location>
        <position position="632"/>
    </location>
</feature>
<feature type="modified residue" description="3-hydroxyproline" evidence="2">
    <location>
        <position position="647"/>
    </location>
</feature>
<feature type="modified residue" description="3-hydroxyproline" evidence="2">
    <location>
        <position position="1214"/>
    </location>
</feature>
<feature type="modified residue" description="3-hydroxyproline" evidence="2">
    <location>
        <position position="1424"/>
    </location>
</feature>
<feature type="glycosylation site" description="N-linked (GlcNAc...) asparagine" evidence="3">
    <location>
        <position position="126"/>
    </location>
</feature>
<feature type="disulfide bond" description="Or C-1460 with C-1548" evidence="4">
    <location>
        <begin position="1460"/>
        <end position="1551"/>
    </location>
</feature>
<feature type="disulfide bond" description="Or C-1493 with C-1551" evidence="4">
    <location>
        <begin position="1493"/>
        <end position="1548"/>
    </location>
</feature>
<feature type="disulfide bond" evidence="4">
    <location>
        <begin position="1505"/>
        <end position="1511"/>
    </location>
</feature>
<feature type="disulfide bond" description="Or C-1570 with C-1662" evidence="4">
    <location>
        <begin position="1570"/>
        <end position="1665"/>
    </location>
</feature>
<feature type="disulfide bond" description="Or C-1604 with C-1665" evidence="4">
    <location>
        <begin position="1604"/>
        <end position="1662"/>
    </location>
</feature>
<feature type="disulfide bond" evidence="4">
    <location>
        <begin position="1616"/>
        <end position="1622"/>
    </location>
</feature>
<feature type="cross-link" description="S-Lysyl-methionine sulfilimine (Met-Lys) (interchain with K-1651)" evidence="8">
    <location>
        <position position="1533"/>
    </location>
</feature>
<feature type="cross-link" description="S-Lysyl-methionine sulfilimine (Lys-Met) (interchain with M-1533)" evidence="8">
    <location>
        <position position="1651"/>
    </location>
</feature>
<feature type="sequence conflict" description="In Ref. 4; CAA29946." evidence="12" ref="4">
    <original>A</original>
    <variation>P</variation>
    <location>
        <position position="26"/>
    </location>
</feature>
<feature type="sequence conflict" description="In Ref. 4; CAA29946." evidence="12" ref="4">
    <original>S</original>
    <variation>L</variation>
    <location>
        <position position="186"/>
    </location>
</feature>
<feature type="sequence conflict" description="In Ref. 4; CAA29946." evidence="12" ref="4">
    <original>Q</original>
    <variation>S</variation>
    <location>
        <position position="319"/>
    </location>
</feature>
<feature type="sequence conflict" description="In Ref. 4; CAA29946." evidence="12" ref="4">
    <original>Q</original>
    <variation>L</variation>
    <location>
        <position position="369"/>
    </location>
</feature>
<feature type="sequence conflict" description="In Ref. 4; CAA29946." evidence="12" ref="4">
    <original>L</original>
    <variation>F</variation>
    <location>
        <position position="403"/>
    </location>
</feature>
<feature type="sequence conflict" description="In Ref. 4; CAA29946." evidence="12" ref="4">
    <original>P</original>
    <variation>L</variation>
    <location>
        <position position="481"/>
    </location>
</feature>
<feature type="sequence conflict" description="In Ref. 4; CAA29946." evidence="12" ref="4">
    <original>Q</original>
    <variation>H</variation>
    <location>
        <position position="493"/>
    </location>
</feature>
<feature type="sequence conflict" description="In Ref. 2; BAE27208." evidence="12" ref="2">
    <original>G</original>
    <variation>S</variation>
    <location>
        <position position="621"/>
    </location>
</feature>
<feature type="sequence conflict" description="In Ref. 4; CAA29946." evidence="12" ref="4">
    <original>S</original>
    <variation>I</variation>
    <location>
        <position position="712"/>
    </location>
</feature>
<feature type="sequence conflict" description="In Ref. 1; AAA50292." evidence="12" ref="1">
    <original>Q</original>
    <variation>E</variation>
    <location>
        <position position="813"/>
    </location>
</feature>
<feature type="sequence conflict" description="In Ref. 4; CAA29946." evidence="12" ref="4">
    <original>Q</original>
    <variation>H</variation>
    <location>
        <position position="982"/>
    </location>
</feature>
<feature type="sequence conflict" description="In Ref. 10; AAA37342." evidence="12" ref="10">
    <original>V</original>
    <variation>S</variation>
    <location>
        <position position="1397"/>
    </location>
</feature>
<reference key="1">
    <citation type="journal article" date="1989" name="J. Biol. Chem.">
        <title>The complete primary structure for the alpha 1-chain of mouse collagen IV. Differential evolution of collagen IV domains.</title>
        <authorList>
            <person name="Muthukumaran G."/>
            <person name="Blumberg B."/>
            <person name="Kurkinen M."/>
        </authorList>
    </citation>
    <scope>NUCLEOTIDE SEQUENCE [MRNA]</scope>
</reference>
<reference key="2">
    <citation type="journal article" date="2005" name="Science">
        <title>The transcriptional landscape of the mammalian genome.</title>
        <authorList>
            <person name="Carninci P."/>
            <person name="Kasukawa T."/>
            <person name="Katayama S."/>
            <person name="Gough J."/>
            <person name="Frith M.C."/>
            <person name="Maeda N."/>
            <person name="Oyama R."/>
            <person name="Ravasi T."/>
            <person name="Lenhard B."/>
            <person name="Wells C."/>
            <person name="Kodzius R."/>
            <person name="Shimokawa K."/>
            <person name="Bajic V.B."/>
            <person name="Brenner S.E."/>
            <person name="Batalov S."/>
            <person name="Forrest A.R."/>
            <person name="Zavolan M."/>
            <person name="Davis M.J."/>
            <person name="Wilming L.G."/>
            <person name="Aidinis V."/>
            <person name="Allen J.E."/>
            <person name="Ambesi-Impiombato A."/>
            <person name="Apweiler R."/>
            <person name="Aturaliya R.N."/>
            <person name="Bailey T.L."/>
            <person name="Bansal M."/>
            <person name="Baxter L."/>
            <person name="Beisel K.W."/>
            <person name="Bersano T."/>
            <person name="Bono H."/>
            <person name="Chalk A.M."/>
            <person name="Chiu K.P."/>
            <person name="Choudhary V."/>
            <person name="Christoffels A."/>
            <person name="Clutterbuck D.R."/>
            <person name="Crowe M.L."/>
            <person name="Dalla E."/>
            <person name="Dalrymple B.P."/>
            <person name="de Bono B."/>
            <person name="Della Gatta G."/>
            <person name="di Bernardo D."/>
            <person name="Down T."/>
            <person name="Engstrom P."/>
            <person name="Fagiolini M."/>
            <person name="Faulkner G."/>
            <person name="Fletcher C.F."/>
            <person name="Fukushima T."/>
            <person name="Furuno M."/>
            <person name="Futaki S."/>
            <person name="Gariboldi M."/>
            <person name="Georgii-Hemming P."/>
            <person name="Gingeras T.R."/>
            <person name="Gojobori T."/>
            <person name="Green R.E."/>
            <person name="Gustincich S."/>
            <person name="Harbers M."/>
            <person name="Hayashi Y."/>
            <person name="Hensch T.K."/>
            <person name="Hirokawa N."/>
            <person name="Hill D."/>
            <person name="Huminiecki L."/>
            <person name="Iacono M."/>
            <person name="Ikeo K."/>
            <person name="Iwama A."/>
            <person name="Ishikawa T."/>
            <person name="Jakt M."/>
            <person name="Kanapin A."/>
            <person name="Katoh M."/>
            <person name="Kawasawa Y."/>
            <person name="Kelso J."/>
            <person name="Kitamura H."/>
            <person name="Kitano H."/>
            <person name="Kollias G."/>
            <person name="Krishnan S.P."/>
            <person name="Kruger A."/>
            <person name="Kummerfeld S.K."/>
            <person name="Kurochkin I.V."/>
            <person name="Lareau L.F."/>
            <person name="Lazarevic D."/>
            <person name="Lipovich L."/>
            <person name="Liu J."/>
            <person name="Liuni S."/>
            <person name="McWilliam S."/>
            <person name="Madan Babu M."/>
            <person name="Madera M."/>
            <person name="Marchionni L."/>
            <person name="Matsuda H."/>
            <person name="Matsuzawa S."/>
            <person name="Miki H."/>
            <person name="Mignone F."/>
            <person name="Miyake S."/>
            <person name="Morris K."/>
            <person name="Mottagui-Tabar S."/>
            <person name="Mulder N."/>
            <person name="Nakano N."/>
            <person name="Nakauchi H."/>
            <person name="Ng P."/>
            <person name="Nilsson R."/>
            <person name="Nishiguchi S."/>
            <person name="Nishikawa S."/>
            <person name="Nori F."/>
            <person name="Ohara O."/>
            <person name="Okazaki Y."/>
            <person name="Orlando V."/>
            <person name="Pang K.C."/>
            <person name="Pavan W.J."/>
            <person name="Pavesi G."/>
            <person name="Pesole G."/>
            <person name="Petrovsky N."/>
            <person name="Piazza S."/>
            <person name="Reed J."/>
            <person name="Reid J.F."/>
            <person name="Ring B.Z."/>
            <person name="Ringwald M."/>
            <person name="Rost B."/>
            <person name="Ruan Y."/>
            <person name="Salzberg S.L."/>
            <person name="Sandelin A."/>
            <person name="Schneider C."/>
            <person name="Schoenbach C."/>
            <person name="Sekiguchi K."/>
            <person name="Semple C.A."/>
            <person name="Seno S."/>
            <person name="Sessa L."/>
            <person name="Sheng Y."/>
            <person name="Shibata Y."/>
            <person name="Shimada H."/>
            <person name="Shimada K."/>
            <person name="Silva D."/>
            <person name="Sinclair B."/>
            <person name="Sperling S."/>
            <person name="Stupka E."/>
            <person name="Sugiura K."/>
            <person name="Sultana R."/>
            <person name="Takenaka Y."/>
            <person name="Taki K."/>
            <person name="Tammoja K."/>
            <person name="Tan S.L."/>
            <person name="Tang S."/>
            <person name="Taylor M.S."/>
            <person name="Tegner J."/>
            <person name="Teichmann S.A."/>
            <person name="Ueda H.R."/>
            <person name="van Nimwegen E."/>
            <person name="Verardo R."/>
            <person name="Wei C.L."/>
            <person name="Yagi K."/>
            <person name="Yamanishi H."/>
            <person name="Zabarovsky E."/>
            <person name="Zhu S."/>
            <person name="Zimmer A."/>
            <person name="Hide W."/>
            <person name="Bult C."/>
            <person name="Grimmond S.M."/>
            <person name="Teasdale R.D."/>
            <person name="Liu E.T."/>
            <person name="Brusic V."/>
            <person name="Quackenbush J."/>
            <person name="Wahlestedt C."/>
            <person name="Mattick J.S."/>
            <person name="Hume D.A."/>
            <person name="Kai C."/>
            <person name="Sasaki D."/>
            <person name="Tomaru Y."/>
            <person name="Fukuda S."/>
            <person name="Kanamori-Katayama M."/>
            <person name="Suzuki M."/>
            <person name="Aoki J."/>
            <person name="Arakawa T."/>
            <person name="Iida J."/>
            <person name="Imamura K."/>
            <person name="Itoh M."/>
            <person name="Kato T."/>
            <person name="Kawaji H."/>
            <person name="Kawagashira N."/>
            <person name="Kawashima T."/>
            <person name="Kojima M."/>
            <person name="Kondo S."/>
            <person name="Konno H."/>
            <person name="Nakano K."/>
            <person name="Ninomiya N."/>
            <person name="Nishio T."/>
            <person name="Okada M."/>
            <person name="Plessy C."/>
            <person name="Shibata K."/>
            <person name="Shiraki T."/>
            <person name="Suzuki S."/>
            <person name="Tagami M."/>
            <person name="Waki K."/>
            <person name="Watahiki A."/>
            <person name="Okamura-Oho Y."/>
            <person name="Suzuki H."/>
            <person name="Kawai J."/>
            <person name="Hayashizaki Y."/>
        </authorList>
    </citation>
    <scope>NUCLEOTIDE SEQUENCE [LARGE SCALE MRNA]</scope>
    <source>
        <strain>C57BL/6J</strain>
        <tissue>Brain</tissue>
        <tissue>Eye</tissue>
        <tissue>Heart</tissue>
        <tissue>Placenta</tissue>
    </source>
</reference>
<reference key="3">
    <citation type="journal article" date="2004" name="Genome Res.">
        <title>The status, quality, and expansion of the NIH full-length cDNA project: the Mammalian Gene Collection (MGC).</title>
        <authorList>
            <consortium name="The MGC Project Team"/>
        </authorList>
    </citation>
    <scope>NUCLEOTIDE SEQUENCE [LARGE SCALE MRNA]</scope>
    <source>
        <strain>C57BL/6J</strain>
        <strain>FVB/N</strain>
        <tissue>Brain</tissue>
        <tissue>Colon</tissue>
        <tissue>Mammary gland</tissue>
    </source>
</reference>
<reference key="4">
    <citation type="journal article" date="1988" name="FEBS Lett.">
        <title>cDNA clones completing the nucleotide and derived amino acid sequence of the alpha 1 chain of basement membrane (type IV) collagen from mouse.</title>
        <authorList>
            <person name="Wood L."/>
            <person name="Theriault N."/>
            <person name="Vogeli G."/>
        </authorList>
    </citation>
    <scope>NUCLEOTIDE SEQUENCE [MRNA] OF 1-1154</scope>
</reference>
<reference key="5">
    <citation type="journal article" date="1988" name="J. Biol. Chem.">
        <title>Structure of the amino-terminal portion of the murine alpha 1(IV) collagen chain and the corresponding region of the gene.</title>
        <authorList>
            <person name="Killen P.D."/>
            <person name="Burbelo P.D."/>
            <person name="Sakurai Y."/>
            <person name="Yamada Y."/>
        </authorList>
    </citation>
    <scope>NUCLEOTIDE SEQUENCE [MRNA] OF 1-129</scope>
</reference>
<reference key="6">
    <citation type="journal article" date="1988" name="J. Biol. Chem.">
        <title>Characterization of the promoter for the alpha 1 (IV) collagen gene. DNA sequences within the first intron enhance transcription.</title>
        <authorList>
            <person name="Killen P.D."/>
            <person name="Burbelo P.D."/>
            <person name="Martin G.R."/>
            <person name="Yamada Y."/>
        </authorList>
    </citation>
    <scope>NUCLEOTIDE SEQUENCE [GENOMIC DNA] OF 1-28</scope>
</reference>
<reference key="7">
    <citation type="journal article" date="1988" name="J. Biol. Chem.">
        <title>Head-to-head arrangement of murine type IV collagen genes.</title>
        <authorList>
            <person name="Kaytes P."/>
            <person name="Wood L."/>
            <person name="Theriault N."/>
            <person name="Kurkinen M."/>
            <person name="Vogeli G."/>
        </authorList>
    </citation>
    <scope>NUCLEOTIDE SEQUENCE [GENOMIC DNA] OF 1-28</scope>
</reference>
<reference key="8">
    <citation type="journal article" date="1988" name="Proc. Natl. Acad. Sci. U.S.A.">
        <title>Alpha 1(IV) and alpha 2(IV) collagen genes are regulated by a bidirectional promoter and a shared enhancer.</title>
        <authorList>
            <person name="Burbelo P.D."/>
            <person name="Martin G.R."/>
            <person name="Yamada Y."/>
        </authorList>
    </citation>
    <scope>NUCLEOTIDE SEQUENCE [GENOMIC DNA] OF 1-28</scope>
</reference>
<reference key="9">
    <citation type="journal article" date="1986" name="J. Biol. Chem.">
        <title>Alpha 1 type IV collagen gene evolved differently from fibrillar collagen genes.</title>
        <authorList>
            <person name="Sakurai Y."/>
            <person name="Sullivan M."/>
            <person name="Yamada Y."/>
        </authorList>
    </citation>
    <scope>NUCLEOTIDE SEQUENCE [GENOMIC DNA] OF 1110-1135</scope>
</reference>
<reference key="10">
    <citation type="journal article" date="1986" name="Gene">
        <title>Isolation of an alpha 1 type-IV collagen cDNA clone using a synthetic oligodeoxynucleotide.</title>
        <authorList>
            <person name="Nath P."/>
            <person name="Laurent M."/>
            <person name="Horn E."/>
            <person name="Sobel M.E."/>
            <person name="Zon G."/>
            <person name="Vogeli G."/>
        </authorList>
    </citation>
    <scope>NUCLEOTIDE SEQUENCE [MRNA] OF 1149-1424</scope>
</reference>
<reference key="11">
    <citation type="journal article" date="1985" name="Eur. J. Biochem.">
        <title>Amino acid sequence of the non-collagenous globular domain (NC1) of the alpha 1(IV) chain of basement membrane collagen as derived from complementary DNA.</title>
        <authorList>
            <person name="Oberbaeumer I."/>
            <person name="Laurent M."/>
            <person name="Schwarz U."/>
            <person name="Sakurai Y."/>
            <person name="Yamada Y."/>
            <person name="Vogeli G."/>
            <person name="Voss T."/>
            <person name="Siebold B."/>
            <person name="Glanville R.W."/>
            <person name="Kuhn K."/>
        </authorList>
    </citation>
    <scope>NUCLEOTIDE SEQUENCE [MRNA] OF 1276-1669</scope>
</reference>
<reference key="12">
    <citation type="journal article" date="1987" name="J. Biol. Chem.">
        <title>Extensive homology between the carboxyl-terminal peptides of mouse alpha 1(IV) and alpha 2(IV) collagen.</title>
        <authorList>
            <person name="Kurkinen M."/>
            <person name="Condon M.R."/>
            <person name="Blumberg B."/>
            <person name="Barlow D."/>
            <person name="Quinones S."/>
            <person name="Saus J."/>
            <person name="Pihlajaniemi T."/>
        </authorList>
    </citation>
    <scope>NUCLEOTIDE SEQUENCE [MRNA] OF 1441-1669</scope>
</reference>
<reference key="13">
    <citation type="journal article" date="2005" name="Science">
        <title>Mutations in Col4a1 cause perinatal cerebral hemorrhage and porencephaly.</title>
        <authorList>
            <person name="Gould D.B."/>
            <person name="Phalan F.C."/>
            <person name="Breedveld G.J."/>
            <person name="van Mil S.E."/>
            <person name="Smith R.S."/>
            <person name="Schimenti J.C."/>
            <person name="Aguglia U."/>
            <person name="van der Knaap M.S."/>
            <person name="Heutink P."/>
            <person name="John S.W.M."/>
        </authorList>
    </citation>
    <scope>DISRUPTION PHENOTYPE</scope>
</reference>
<reference key="14">
    <citation type="journal article" date="2007" name="J. Biol. Chem.">
        <title>A comparative analysis of the fibulin protein family. Biochemical characterization, binding interactions, and tissue localization.</title>
        <authorList>
            <person name="Kobayashi N."/>
            <person name="Kostka G."/>
            <person name="Garbe J.H."/>
            <person name="Keene D.R."/>
            <person name="Baechinger H.P."/>
            <person name="Hanisch F.G."/>
            <person name="Markova D."/>
            <person name="Tsuda T."/>
            <person name="Timpl R."/>
            <person name="Chu M.L."/>
            <person name="Sasaki T."/>
        </authorList>
    </citation>
    <scope>INTERACTION WITH EFEMP2</scope>
</reference>
<reference key="15">
    <citation type="journal article" date="2010" name="Cell">
        <title>A tissue-specific atlas of mouse protein phosphorylation and expression.</title>
        <authorList>
            <person name="Huttlin E.L."/>
            <person name="Jedrychowski M.P."/>
            <person name="Elias J.E."/>
            <person name="Goswami T."/>
            <person name="Rad R."/>
            <person name="Beausoleil S.A."/>
            <person name="Villen J."/>
            <person name="Haas W."/>
            <person name="Sowa M.E."/>
            <person name="Gygi S.P."/>
        </authorList>
    </citation>
    <scope>IDENTIFICATION BY MASS SPECTROMETRY [LARGE SCALE ANALYSIS]</scope>
    <source>
        <tissue>Heart</tissue>
        <tissue>Kidney</tissue>
        <tissue>Lung</tissue>
        <tissue>Spleen</tissue>
    </source>
</reference>
<reference key="16">
    <citation type="journal article" date="2012" name="Nat. Chem. Biol.">
        <title>Peroxidasin forms sulfilimine chemical bonds using hypohalous acids in tissue genesis.</title>
        <authorList>
            <person name="Bhave G."/>
            <person name="Cummings C.F."/>
            <person name="Vanacore R.M."/>
            <person name="Kumagai-Cresse C."/>
            <person name="Ero-Tolliver I.A."/>
            <person name="Rafi M."/>
            <person name="Kang J.S."/>
            <person name="Pedchenko V."/>
            <person name="Fessler L.I."/>
            <person name="Fessler J.H."/>
            <person name="Hudson B.G."/>
        </authorList>
    </citation>
    <scope>INTERCHAIN SULFILIMINE BONDS</scope>
    <scope>IDENTIFICATION BY MASS SPECTROMETRY</scope>
    <scope>DOMAIN</scope>
</reference>
<reference key="17">
    <citation type="journal article" date="2014" name="Proc. Natl. Acad. Sci. U.S.A.">
        <title>Biological role of prolyl 3-hydroxylation in type IV collagen.</title>
        <authorList>
            <person name="Pokidysheva E."/>
            <person name="Boudko S."/>
            <person name="Vranka J."/>
            <person name="Zientek K."/>
            <person name="Maddox K."/>
            <person name="Moser M."/>
            <person name="Faessler R."/>
            <person name="Ware J."/>
            <person name="Baechinger H.P."/>
        </authorList>
    </citation>
    <scope>SUBCELLULAR LOCATION</scope>
    <scope>PROLINE HYDROXYLATION</scope>
</reference>
<reference key="18">
    <citation type="journal article" date="2015" name="J. Biol. Chem.">
        <title>Post-translationally abnormal collagens of prolyl 3-hydroxylase-2 null mice offer a pathobiological mechanism for the high myopia linked to human LEPREL1 mutations.</title>
        <authorList>
            <person name="Hudson D.M."/>
            <person name="Joeng K.S."/>
            <person name="Werther R."/>
            <person name="Rajagopal A."/>
            <person name="Weis M."/>
            <person name="Lee B.H."/>
            <person name="Eyre D.R."/>
        </authorList>
    </citation>
    <scope>HYDROXYLATION AT PRO-602; PRO-603; PRO-605; PRO-606; PRO-623; PRO-626; PRO-629 AND PRO-632</scope>
    <scope>GLYCOSYLATION OF HYDROXYLATED LYSINE</scope>
    <scope>IDENTIFICATION BY MASS SPECTROMETRY</scope>
</reference>
<reference key="19">
    <citation type="journal article" date="2017" name="Am. J. Physiol.">
        <title>The Sulfilimine Cross-Link of Collagen IV Contributes to Kidney Tubular Basement Membrane Stiffness.</title>
        <authorList>
            <person name="Bhave G."/>
            <person name="Colon S."/>
            <person name="Ferrell N."/>
        </authorList>
    </citation>
    <scope>SULFILIMINE BONDS</scope>
    <scope>FUNCTION</scope>
</reference>
<keyword id="KW-0037">Angiogenesis</keyword>
<keyword id="KW-0084">Basement membrane</keyword>
<keyword id="KW-0176">Collagen</keyword>
<keyword id="KW-1015">Disulfide bond</keyword>
<keyword id="KW-0272">Extracellular matrix</keyword>
<keyword id="KW-0325">Glycoprotein</keyword>
<keyword id="KW-0379">Hydroxylation</keyword>
<keyword id="KW-1185">Reference proteome</keyword>
<keyword id="KW-0677">Repeat</keyword>
<keyword id="KW-0964">Secreted</keyword>
<keyword id="KW-0732">Signal</keyword>
<protein>
    <recommendedName>
        <fullName evidence="12">Collagen alpha-1(IV) chain</fullName>
    </recommendedName>
    <component>
        <recommendedName>
            <fullName>Arresten</fullName>
        </recommendedName>
    </component>
</protein>
<evidence type="ECO:0000250" key="1">
    <source>
        <dbReference type="UniProtKB" id="P02462"/>
    </source>
</evidence>
<evidence type="ECO:0000250" key="2">
    <source>
        <dbReference type="UniProtKB" id="Q7SIB2"/>
    </source>
</evidence>
<evidence type="ECO:0000255" key="3"/>
<evidence type="ECO:0000255" key="4">
    <source>
        <dbReference type="PROSITE-ProRule" id="PRU00736"/>
    </source>
</evidence>
<evidence type="ECO:0000256" key="5">
    <source>
        <dbReference type="SAM" id="MobiDB-lite"/>
    </source>
</evidence>
<evidence type="ECO:0000269" key="6">
    <source>
    </source>
</evidence>
<evidence type="ECO:0000269" key="7">
    <source>
    </source>
</evidence>
<evidence type="ECO:0000269" key="8">
    <source>
    </source>
</evidence>
<evidence type="ECO:0000269" key="9">
    <source>
    </source>
</evidence>
<evidence type="ECO:0000269" key="10">
    <source>
    </source>
</evidence>
<evidence type="ECO:0000269" key="11">
    <source>
    </source>
</evidence>
<evidence type="ECO:0000305" key="12"/>
<evidence type="ECO:0000305" key="13">
    <source>
    </source>
</evidence>
<evidence type="ECO:0000312" key="14">
    <source>
        <dbReference type="MGI" id="MGI:88454"/>
    </source>
</evidence>
<dbReference type="EMBL" id="J04694">
    <property type="protein sequence ID" value="AAA50292.1"/>
    <property type="molecule type" value="mRNA"/>
</dbReference>
<dbReference type="EMBL" id="AK142097">
    <property type="protein sequence ID" value="BAE24936.1"/>
    <property type="molecule type" value="mRNA"/>
</dbReference>
<dbReference type="EMBL" id="AK146487">
    <property type="protein sequence ID" value="BAE27208.1"/>
    <property type="molecule type" value="mRNA"/>
</dbReference>
<dbReference type="EMBL" id="AK147284">
    <property type="protein sequence ID" value="BAE27820.1"/>
    <property type="molecule type" value="mRNA"/>
</dbReference>
<dbReference type="EMBL" id="AK147355">
    <property type="protein sequence ID" value="BAE27863.1"/>
    <property type="molecule type" value="mRNA"/>
</dbReference>
<dbReference type="EMBL" id="AK147661">
    <property type="protein sequence ID" value="BAE28055.1"/>
    <property type="molecule type" value="mRNA"/>
</dbReference>
<dbReference type="EMBL" id="BC002269">
    <property type="protein sequence ID" value="AAH02269.1"/>
    <property type="molecule type" value="mRNA"/>
</dbReference>
<dbReference type="EMBL" id="BC056620">
    <property type="protein sequence ID" value="AAH56620.1"/>
    <property type="molecule type" value="mRNA"/>
</dbReference>
<dbReference type="EMBL" id="BC072650">
    <property type="protein sequence ID" value="AAH72650.1"/>
    <property type="status" value="ALT_SEQ"/>
    <property type="molecule type" value="mRNA"/>
</dbReference>
<dbReference type="EMBL" id="X06777">
    <property type="protein sequence ID" value="CAA29946.1"/>
    <property type="molecule type" value="mRNA"/>
</dbReference>
<dbReference type="EMBL" id="J03758">
    <property type="protein sequence ID" value="AAA37439.1"/>
    <property type="molecule type" value="mRNA"/>
</dbReference>
<dbReference type="EMBL" id="J03944">
    <property type="protein sequence ID" value="AAA37442.1"/>
    <property type="molecule type" value="Genomic_DNA"/>
</dbReference>
<dbReference type="EMBL" id="J04448">
    <property type="protein sequence ID" value="AAA37437.1"/>
    <property type="molecule type" value="Genomic_DNA"/>
</dbReference>
<dbReference type="EMBL" id="M23333">
    <property type="protein sequence ID" value="AAA51625.1"/>
    <property type="molecule type" value="Genomic_DNA"/>
</dbReference>
<dbReference type="EMBL" id="M12879">
    <property type="protein sequence ID" value="AAA37343.1"/>
    <property type="molecule type" value="Genomic_DNA"/>
</dbReference>
<dbReference type="EMBL" id="M13024">
    <property type="status" value="NOT_ANNOTATED_CDS"/>
    <property type="molecule type" value="Genomic_DNA"/>
</dbReference>
<dbReference type="EMBL" id="M13025">
    <property type="status" value="NOT_ANNOTATED_CDS"/>
    <property type="molecule type" value="Genomic_DNA"/>
</dbReference>
<dbReference type="EMBL" id="M13026">
    <property type="protein sequence ID" value="AAA37344.1"/>
    <property type="molecule type" value="Genomic_DNA"/>
</dbReference>
<dbReference type="EMBL" id="M13027">
    <property type="protein sequence ID" value="AAA37345.1"/>
    <property type="molecule type" value="Genomic_DNA"/>
</dbReference>
<dbReference type="EMBL" id="M13043">
    <property type="protein sequence ID" value="AAA37346.1"/>
    <property type="molecule type" value="Genomic_DNA"/>
</dbReference>
<dbReference type="EMBL" id="M14042">
    <property type="protein sequence ID" value="AAA37342.1"/>
    <property type="molecule type" value="mRNA"/>
</dbReference>
<dbReference type="EMBL" id="X02201">
    <property type="protein sequence ID" value="CAA26132.1"/>
    <property type="molecule type" value="mRNA"/>
</dbReference>
<dbReference type="EMBL" id="M15832">
    <property type="protein sequence ID" value="AAA37340.1"/>
    <property type="molecule type" value="mRNA"/>
</dbReference>
<dbReference type="CCDS" id="CCDS40219.1"/>
<dbReference type="PIR" id="A33525">
    <property type="entry name" value="CGMS4B"/>
</dbReference>
<dbReference type="RefSeq" id="NP_034061.2">
    <property type="nucleotide sequence ID" value="NM_009931.2"/>
</dbReference>
<dbReference type="BioGRID" id="198816">
    <property type="interactions" value="4"/>
</dbReference>
<dbReference type="ComplexPortal" id="CPX-2959">
    <property type="entry name" value="Collagen type IV trimer variant 1"/>
</dbReference>
<dbReference type="CORUM" id="P02463"/>
<dbReference type="FunCoup" id="P02463">
    <property type="interactions" value="485"/>
</dbReference>
<dbReference type="STRING" id="10090.ENSMUSP00000033898"/>
<dbReference type="GlyCosmos" id="P02463">
    <property type="glycosylation" value="1 site, No reported glycans"/>
</dbReference>
<dbReference type="GlyGen" id="P02463">
    <property type="glycosylation" value="16 sites"/>
</dbReference>
<dbReference type="iPTMnet" id="P02463"/>
<dbReference type="PhosphoSitePlus" id="P02463"/>
<dbReference type="jPOST" id="P02463"/>
<dbReference type="PaxDb" id="10090-ENSMUSP00000033898"/>
<dbReference type="PeptideAtlas" id="P02463"/>
<dbReference type="ProteomicsDB" id="279129"/>
<dbReference type="Pumba" id="P02463"/>
<dbReference type="Antibodypedia" id="3436">
    <property type="antibodies" value="800 antibodies from 40 providers"/>
</dbReference>
<dbReference type="DNASU" id="12826"/>
<dbReference type="Ensembl" id="ENSMUST00000033898.10">
    <property type="protein sequence ID" value="ENSMUSP00000033898.10"/>
    <property type="gene ID" value="ENSMUSG00000031502.12"/>
</dbReference>
<dbReference type="GeneID" id="12826"/>
<dbReference type="KEGG" id="mmu:12826"/>
<dbReference type="UCSC" id="uc009kvb.2">
    <property type="organism name" value="mouse"/>
</dbReference>
<dbReference type="AGR" id="MGI:88454"/>
<dbReference type="CTD" id="1282"/>
<dbReference type="MGI" id="MGI:88454">
    <property type="gene designation" value="Col4a1"/>
</dbReference>
<dbReference type="VEuPathDB" id="HostDB:ENSMUSG00000031502"/>
<dbReference type="eggNOG" id="KOG3544">
    <property type="taxonomic scope" value="Eukaryota"/>
</dbReference>
<dbReference type="GeneTree" id="ENSGT00940000157678"/>
<dbReference type="HOGENOM" id="CLU_002023_0_0_1"/>
<dbReference type="InParanoid" id="P02463"/>
<dbReference type="OMA" id="DIGGRCN"/>
<dbReference type="OrthoDB" id="10071882at2759"/>
<dbReference type="PhylomeDB" id="P02463"/>
<dbReference type="TreeFam" id="TF316865"/>
<dbReference type="Reactome" id="R-MMU-1442490">
    <property type="pathway name" value="Collagen degradation"/>
</dbReference>
<dbReference type="Reactome" id="R-MMU-1474244">
    <property type="pathway name" value="Extracellular matrix organization"/>
</dbReference>
<dbReference type="Reactome" id="R-MMU-1650814">
    <property type="pathway name" value="Collagen biosynthesis and modifying enzymes"/>
</dbReference>
<dbReference type="Reactome" id="R-MMU-186797">
    <property type="pathway name" value="Signaling by PDGF"/>
</dbReference>
<dbReference type="Reactome" id="R-MMU-2022090">
    <property type="pathway name" value="Assembly of collagen fibrils and other multimeric structures"/>
</dbReference>
<dbReference type="Reactome" id="R-MMU-216083">
    <property type="pathway name" value="Integrin cell surface interactions"/>
</dbReference>
<dbReference type="Reactome" id="R-MMU-2243919">
    <property type="pathway name" value="Crosslinking of collagen fibrils"/>
</dbReference>
<dbReference type="Reactome" id="R-MMU-3000157">
    <property type="pathway name" value="Laminin interactions"/>
</dbReference>
<dbReference type="Reactome" id="R-MMU-3000171">
    <property type="pathway name" value="Non-integrin membrane-ECM interactions"/>
</dbReference>
<dbReference type="Reactome" id="R-MMU-419037">
    <property type="pathway name" value="NCAM1 interactions"/>
</dbReference>
<dbReference type="Reactome" id="R-MMU-8948216">
    <property type="pathway name" value="Collagen chain trimerization"/>
</dbReference>
<dbReference type="BioGRID-ORCS" id="12826">
    <property type="hits" value="3 hits in 80 CRISPR screens"/>
</dbReference>
<dbReference type="ChiTaRS" id="Col4a1">
    <property type="organism name" value="mouse"/>
</dbReference>
<dbReference type="PRO" id="PR:P02463"/>
<dbReference type="Proteomes" id="UP000000589">
    <property type="component" value="Chromosome 8"/>
</dbReference>
<dbReference type="RNAct" id="P02463">
    <property type="molecule type" value="protein"/>
</dbReference>
<dbReference type="Bgee" id="ENSMUSG00000031502">
    <property type="expression patterns" value="Expressed in epithelium of lens and 294 other cell types or tissues"/>
</dbReference>
<dbReference type="ExpressionAtlas" id="P02463">
    <property type="expression patterns" value="baseline and differential"/>
</dbReference>
<dbReference type="GO" id="GO:0005604">
    <property type="term" value="C:basement membrane"/>
    <property type="evidence" value="ECO:0000314"/>
    <property type="project" value="UniProtKB"/>
</dbReference>
<dbReference type="GO" id="GO:0005587">
    <property type="term" value="C:collagen type IV trimer"/>
    <property type="evidence" value="ECO:0000314"/>
    <property type="project" value="MGI"/>
</dbReference>
<dbReference type="GO" id="GO:0062023">
    <property type="term" value="C:collagen-containing extracellular matrix"/>
    <property type="evidence" value="ECO:0007005"/>
    <property type="project" value="UniProtKB"/>
</dbReference>
<dbReference type="GO" id="GO:0005576">
    <property type="term" value="C:extracellular region"/>
    <property type="evidence" value="ECO:0000304"/>
    <property type="project" value="Reactome"/>
</dbReference>
<dbReference type="GO" id="GO:0005615">
    <property type="term" value="C:extracellular space"/>
    <property type="evidence" value="ECO:0007005"/>
    <property type="project" value="BHF-UCL"/>
</dbReference>
<dbReference type="GO" id="GO:0030020">
    <property type="term" value="F:extracellular matrix structural constituent conferring tensile strength"/>
    <property type="evidence" value="ECO:0007669"/>
    <property type="project" value="Ensembl"/>
</dbReference>
<dbReference type="GO" id="GO:0048407">
    <property type="term" value="F:platelet-derived growth factor binding"/>
    <property type="evidence" value="ECO:0000266"/>
    <property type="project" value="MGI"/>
</dbReference>
<dbReference type="GO" id="GO:0071711">
    <property type="term" value="P:basement membrane organization"/>
    <property type="evidence" value="ECO:0007669"/>
    <property type="project" value="Ensembl"/>
</dbReference>
<dbReference type="GO" id="GO:0007420">
    <property type="term" value="P:brain development"/>
    <property type="evidence" value="ECO:0007669"/>
    <property type="project" value="Ensembl"/>
</dbReference>
<dbReference type="GO" id="GO:0001569">
    <property type="term" value="P:branching involved in blood vessel morphogenesis"/>
    <property type="evidence" value="ECO:0007669"/>
    <property type="project" value="Ensembl"/>
</dbReference>
<dbReference type="GO" id="GO:0071230">
    <property type="term" value="P:cellular response to amino acid stimulus"/>
    <property type="evidence" value="ECO:0000314"/>
    <property type="project" value="MGI"/>
</dbReference>
<dbReference type="GO" id="GO:0038063">
    <property type="term" value="P:collagen-activated tyrosine kinase receptor signaling pathway"/>
    <property type="evidence" value="ECO:0000316"/>
    <property type="project" value="MGI"/>
</dbReference>
<dbReference type="GO" id="GO:0030855">
    <property type="term" value="P:epithelial cell differentiation"/>
    <property type="evidence" value="ECO:0007669"/>
    <property type="project" value="Ensembl"/>
</dbReference>
<dbReference type="GO" id="GO:0007528">
    <property type="term" value="P:neuromuscular junction development"/>
    <property type="evidence" value="ECO:0000315"/>
    <property type="project" value="MGI"/>
</dbReference>
<dbReference type="GO" id="GO:0061333">
    <property type="term" value="P:renal tubule morphogenesis"/>
    <property type="evidence" value="ECO:0007669"/>
    <property type="project" value="Ensembl"/>
</dbReference>
<dbReference type="GO" id="GO:0061304">
    <property type="term" value="P:retinal blood vessel morphogenesis"/>
    <property type="evidence" value="ECO:0007669"/>
    <property type="project" value="Ensembl"/>
</dbReference>
<dbReference type="FunFam" id="2.170.240.10:FF:000001">
    <property type="entry name" value="Collagen IV alpha 1 chain"/>
    <property type="match status" value="1"/>
</dbReference>
<dbReference type="Gene3D" id="2.170.240.10">
    <property type="entry name" value="Collagen IV, non-collagenous"/>
    <property type="match status" value="1"/>
</dbReference>
<dbReference type="InterPro" id="IPR008160">
    <property type="entry name" value="Collagen"/>
</dbReference>
<dbReference type="InterPro" id="IPR001442">
    <property type="entry name" value="Collagen_IV_NC"/>
</dbReference>
<dbReference type="InterPro" id="IPR036954">
    <property type="entry name" value="Collagen_IV_NC_sf"/>
</dbReference>
<dbReference type="InterPro" id="IPR050938">
    <property type="entry name" value="Collagen_Structural_Proteins"/>
</dbReference>
<dbReference type="InterPro" id="IPR016187">
    <property type="entry name" value="CTDL_fold"/>
</dbReference>
<dbReference type="PANTHER" id="PTHR37456:SF6">
    <property type="entry name" value="COLLAGEN ALPHA-1(XXIII) CHAIN-LIKE ISOFORM X2"/>
    <property type="match status" value="1"/>
</dbReference>
<dbReference type="PANTHER" id="PTHR37456">
    <property type="entry name" value="SI:CH211-266K2.1"/>
    <property type="match status" value="1"/>
</dbReference>
<dbReference type="Pfam" id="PF01413">
    <property type="entry name" value="C4"/>
    <property type="match status" value="2"/>
</dbReference>
<dbReference type="Pfam" id="PF01391">
    <property type="entry name" value="Collagen"/>
    <property type="match status" value="16"/>
</dbReference>
<dbReference type="SMART" id="SM00111">
    <property type="entry name" value="C4"/>
    <property type="match status" value="2"/>
</dbReference>
<dbReference type="SUPFAM" id="SSF56436">
    <property type="entry name" value="C-type lectin-like"/>
    <property type="match status" value="2"/>
</dbReference>
<dbReference type="PROSITE" id="PS51403">
    <property type="entry name" value="NC1_IV"/>
    <property type="match status" value="1"/>
</dbReference>
<gene>
    <name evidence="14" type="primary">Col4a1</name>
</gene>
<accession>P02463</accession>
<accession>Q3UHJ4</accession>
<accession>Q3UJE7</accession>
<accession>Q3UQV2</accession>
<accession>Q53X35</accession>
<accession>Q6GQS7</accession>
<accession>Q6PHB5</accession>
<accession>Q99LQ8</accession>
<comment type="function">
    <text evidence="13">Type IV collagen is the major structural component of glomerular basement membranes (GBM), forming a 'chicken-wire' meshwork together with laminins, proteoglycans and entactin/nidogen.</text>
</comment>
<comment type="function">
    <text evidence="1">Arresten, comprising the C-terminal NC1 domain, inhibits angiogenesis and tumor formation. The C-terminal half is found to possess the anti-angiogenic activity. Specifically inhibits endothelial cell proliferation, migration and tube formation.</text>
</comment>
<comment type="subunit">
    <text evidence="2 7">There are six type IV collagen isoforms, alpha 1(IV)-alpha 6(IV), each of which can form a triple helix structure with 2 other chains to generate type IV collagen network. Interacts with EFEMP2 (PubMed:17324935).</text>
</comment>
<comment type="subcellular location">
    <subcellularLocation>
        <location evidence="9">Secreted</location>
        <location evidence="9">Extracellular space</location>
        <location evidence="9">Extracellular matrix</location>
        <location evidence="9">Basement membrane</location>
    </subcellularLocation>
</comment>
<comment type="tissue specificity">
    <text evidence="9">Detected in the basement membrane of the cornea (at protein level).</text>
</comment>
<comment type="domain">
    <text evidence="8 12">Alpha chains of type IV collagen have a non-collagenous domain (NC1) at their C-terminus, frequent interruptions of the G-X-Y repeats in the long central triple-helical domain (which may cause flexibility in the triple helix), and a short N-terminal triple-helical 7S domain. NC1 domain mediates hexamerization of alpha chains of type IV collagen (PubMed:22842973).</text>
</comment>
<comment type="PTM">
    <text evidence="10">Lysines at the third position of the tripeptide repeating unit (G-X-Y) are hydroxylated. The modified lysines can be O-glycosylated.</text>
</comment>
<comment type="PTM">
    <text evidence="10">Contains 4-hydroxyproline. Prolines at the third position of the tripeptide repeating unit (G-X-Y) are hydroxylated in some or all of the chains.</text>
</comment>
<comment type="PTM">
    <text evidence="9 10">Contains 3-hydroxyproline. This modification occurs on the first proline residue in the sequence motif Gly-Pro-Hyp, where Hyp is 4-hydroxyproline.</text>
</comment>
<comment type="PTM">
    <text evidence="1">Type IV collagens contain numerous cysteine residues which are involved in inter- and intramolecular disulfide bonding. 12 of these, located in the NC1 domain, are conserved in all known type IV collagens.</text>
</comment>
<comment type="PTM">
    <text evidence="8 11">The trimeric structure of the NC1 domains is stabilized by covalent bonds (sulfilimine cross-links) between Lys and Met residues. These cross-links are important for the mechanical stability of the basement membrane (PubMed:22842973, PubMed:28424209). Sulfilimine cross-link is catalyzed by PXDN (PubMed:22842973).</text>
</comment>
<comment type="PTM">
    <text evidence="1">Proteolytic processing produces the C-terminal NC1 peptide, arresten.</text>
</comment>
<comment type="disruption phenotype">
    <text evidence="6">Mice develop perinatal cerebral hemorrhage and porencephaly. The mutant protein inhibits the secretion of mutant and normal proteins into the basement membrane of embryonic origin. The mutation is semidominant.</text>
</comment>
<comment type="similarity">
    <text evidence="4">Belongs to the type IV collagen family.</text>
</comment>
<comment type="sequence caution" evidence="12">
    <conflict type="frameshift">
        <sequence resource="EMBL-CDS" id="AAH72650"/>
    </conflict>
</comment>
<comment type="sequence caution" evidence="12">
    <conflict type="miscellaneous discrepancy">
        <sequence resource="EMBL-CDS" id="AAH72650"/>
    </conflict>
    <text>Insertion sequence.</text>
</comment>
<proteinExistence type="evidence at protein level"/>
<name>CO4A1_MOUSE</name>
<organism>
    <name type="scientific">Mus musculus</name>
    <name type="common">Mouse</name>
    <dbReference type="NCBI Taxonomy" id="10090"/>
    <lineage>
        <taxon>Eukaryota</taxon>
        <taxon>Metazoa</taxon>
        <taxon>Chordata</taxon>
        <taxon>Craniata</taxon>
        <taxon>Vertebrata</taxon>
        <taxon>Euteleostomi</taxon>
        <taxon>Mammalia</taxon>
        <taxon>Eutheria</taxon>
        <taxon>Euarchontoglires</taxon>
        <taxon>Glires</taxon>
        <taxon>Rodentia</taxon>
        <taxon>Myomorpha</taxon>
        <taxon>Muroidea</taxon>
        <taxon>Muridae</taxon>
        <taxon>Murinae</taxon>
        <taxon>Mus</taxon>
        <taxon>Mus</taxon>
    </lineage>
</organism>
<sequence length="1669" mass="160679">MGPRLSVWLLLLFAALLLHEERSRAAAKGDCGGSGCGKCDCHGVKGQKGERGLPGLQGVIGFPGMQGPEGPHGPPGQKGDAGEPGLPGTKGTRGPPGAAGYPGNPGLPGIPGQDGPPGPPGIPGCNGTKGERGPLGPPGLPGFSGNPGPPGLPGMKGDPGEILGHVPGTLLKGERGFPGIPGMPGSPGLPGLQGPVGPPGFTGPPGPPGPPGPPGEKGQMGSSFQGPKGDKGEQGVSGPPGVPGQAQVKEKGDFAPTGEKGQKGEPGFPGVPGYGEKGEPGKQGPRGKPGKDGEKGERGSPGIPGDSGYPGLPGRQGPQGEKGEAGLPGPPGTVIGTMPLGEKGDRGYPGAPGLRGEPGPKGFPGTPGQPGPPGFPTPGQAGAPGFPGERGEKGDQGFPGVSLPGPSGRDGAPGPPGPPGPPGQPGHTNGIVECQPGPPGDQGPPGTPGQPGLTGEVGQKGQKGESCLACDTEGLRGPPGPQGPPGEIGFPGQPGAKGDRGLPGRDGLEGLPGPQGSPGLIGQPGAKGEPGEIFFDMRLKGDKGDPGFPGQPGMPGRAGTPGRDGHPGLPGPKGSPGSIGLKGERGPPGGVGFPGSRGDIGPPGPPGVGPIGPVGEKGQAGFPGGPGSPGLPGPKGEAGKVVPLPGPPGAAGLPGSPGFPGPQGDRGFPGTPGRPGIPGEKGAVGQPGIGFPGLPGPKGVDGLPGEIGRPGSPGRPGFNGLPGNPGPQGQKGEPGIGLPGLKGQPGLPGIPGTPGEKGSIGGPGVPGEQGLTGPPGLQGIRGDPGPPGVQGPAGPPGVPGIGPPGAMGPPGGQGPPGSSGPPGIKGEKGFPGFPGLDMPGPKGDKGSQGLPGLTGQSGLPGLPGQQGTPGVPGFPGSKGEMGVMGTPGQPGSPGPAGTPGLPGEKGDHGLPGSSGPRGDPGFKGDKGDVGLPGMPGSMEHVDMGSMKGQKGDQGEKGQIGPTGDKGSRGDPGTPGVPGKDGQAGHPGQPGPKGDPGLSGTPGSPGLPGPKGSVGGMGLPGSPGEKGVPGIPGSQGVPGSPGEKGAKGEKGQSGLPGIGIPGRPGDKGDQGLAGFPGSPGEKGEKGSAGTPGMPGSPGPRGSPGNIGHPGSPGLPGEKGDKGLPGLDGVPGVKGEAGLPGTPGPTGPAGQKGEPGSDGIPGSAGEKGEQGVPGRGFPGFPGSKGDKGSKGEVGFPGLAGSPGIPGVKGEQGFMGPPGPQGQPGLPGTPGHPVEGPKGDRGPQGQPGLPGHPGPMGPPGFPGINGPKGDKGNQGWPGAPGVPGPKGDPGFQGMPGIGGSPGITGSKGDMGLPGVPGFQGQKGLPGLQGVKGDQGDQGVPGPKGLQGPPGPPGPYDVIKGEPGLPGPEGPPGLKGLQGPPGPKGQQGVTGSVGLPGPPGVPGFDGAPGQKGETGPFGPPGPRGFPGPPGPDGLPGSMGPPGTPSVDHGFLVTRHSQTTDDPLCPPGTKILYHGYSLLYVQGNERAHGQDLGTAGSCLRKFSTMPFLFCNINNVCNFASRNDYSYWLSTPEPMPMSMAPISGDNIRPFISRCAVCEAPAMVMAVHSQTIQIPQCPNGWSSLWIGYSFVMHTSAGAEGSGQALASPGSCLEEFRSAPFIECHGRGTCNYYANAYSFWLATIERSEMFKKPTPSTLKAGELRTHVSRCQVCMRRT</sequence>